<evidence type="ECO:0000255" key="1">
    <source>
        <dbReference type="HAMAP-Rule" id="MF_00219"/>
    </source>
</evidence>
<name>PYRC_SALHS</name>
<sequence>MTAPSQVLKIRRPDDWHVHLRDGDMLKTVVPYTSEIYGRAIVMPNLASPITTVDAAIAYRQRILNAVPAGHDFTPLMTCYLTDSLDADELERGFHEGVFTAAKLYPANATTNSSHGVTSVDAIMPVLERMEKLGMPLLVHGEVTHADVDIFDREARFIDTVMEPLRQRLTTLKVVFEHITTKDAAQYVRDGNDYLAATITPQHLMFNRNDMLVGGIRPHLYCLPILKRNIHQQALRELVASGFTRAFLGTDSAPHSRHRKETSCGCAGCFNAPSALGSYAAVFEEMNALAHFEAFCSLNGPQFYGLPVNAGWVELVRDEQQIPGNIALADDSLVPFLAGETIRWSVKK</sequence>
<comment type="function">
    <text evidence="1">Catalyzes the reversible cyclization of carbamoyl aspartate to dihydroorotate.</text>
</comment>
<comment type="catalytic activity">
    <reaction evidence="1">
        <text>(S)-dihydroorotate + H2O = N-carbamoyl-L-aspartate + H(+)</text>
        <dbReference type="Rhea" id="RHEA:24296"/>
        <dbReference type="ChEBI" id="CHEBI:15377"/>
        <dbReference type="ChEBI" id="CHEBI:15378"/>
        <dbReference type="ChEBI" id="CHEBI:30864"/>
        <dbReference type="ChEBI" id="CHEBI:32814"/>
        <dbReference type="EC" id="3.5.2.3"/>
    </reaction>
</comment>
<comment type="cofactor">
    <cofactor evidence="1">
        <name>Zn(2+)</name>
        <dbReference type="ChEBI" id="CHEBI:29105"/>
    </cofactor>
    <text evidence="1">Binds 2 Zn(2+) ions per subunit.</text>
</comment>
<comment type="pathway">
    <text evidence="1">Pyrimidine metabolism; UMP biosynthesis via de novo pathway; (S)-dihydroorotate from bicarbonate: step 3/3.</text>
</comment>
<comment type="subunit">
    <text evidence="1">Homodimer.</text>
</comment>
<comment type="similarity">
    <text evidence="1">Belongs to the metallo-dependent hydrolases superfamily. DHOase family. Class II DHOase subfamily.</text>
</comment>
<accession>B4TET5</accession>
<keyword id="KW-0378">Hydrolase</keyword>
<keyword id="KW-0479">Metal-binding</keyword>
<keyword id="KW-0665">Pyrimidine biosynthesis</keyword>
<keyword id="KW-0862">Zinc</keyword>
<protein>
    <recommendedName>
        <fullName evidence="1">Dihydroorotase</fullName>
        <shortName evidence="1">DHOase</shortName>
        <ecNumber evidence="1">3.5.2.3</ecNumber>
    </recommendedName>
</protein>
<dbReference type="EC" id="3.5.2.3" evidence="1"/>
<dbReference type="EMBL" id="CP001120">
    <property type="protein sequence ID" value="ACF70270.1"/>
    <property type="molecule type" value="Genomic_DNA"/>
</dbReference>
<dbReference type="RefSeq" id="WP_000126610.1">
    <property type="nucleotide sequence ID" value="NC_011083.1"/>
</dbReference>
<dbReference type="SMR" id="B4TET5"/>
<dbReference type="MEROPS" id="M38.A02"/>
<dbReference type="KEGG" id="seh:SeHA_C1275"/>
<dbReference type="HOGENOM" id="CLU_041558_1_0_6"/>
<dbReference type="UniPathway" id="UPA00070">
    <property type="reaction ID" value="UER00117"/>
</dbReference>
<dbReference type="Proteomes" id="UP000001866">
    <property type="component" value="Chromosome"/>
</dbReference>
<dbReference type="GO" id="GO:0005829">
    <property type="term" value="C:cytosol"/>
    <property type="evidence" value="ECO:0007669"/>
    <property type="project" value="TreeGrafter"/>
</dbReference>
<dbReference type="GO" id="GO:0004151">
    <property type="term" value="F:dihydroorotase activity"/>
    <property type="evidence" value="ECO:0007669"/>
    <property type="project" value="UniProtKB-UniRule"/>
</dbReference>
<dbReference type="GO" id="GO:0008270">
    <property type="term" value="F:zinc ion binding"/>
    <property type="evidence" value="ECO:0007669"/>
    <property type="project" value="UniProtKB-UniRule"/>
</dbReference>
<dbReference type="GO" id="GO:0006207">
    <property type="term" value="P:'de novo' pyrimidine nucleobase biosynthetic process"/>
    <property type="evidence" value="ECO:0007669"/>
    <property type="project" value="TreeGrafter"/>
</dbReference>
<dbReference type="GO" id="GO:0044205">
    <property type="term" value="P:'de novo' UMP biosynthetic process"/>
    <property type="evidence" value="ECO:0007669"/>
    <property type="project" value="UniProtKB-UniRule"/>
</dbReference>
<dbReference type="CDD" id="cd01294">
    <property type="entry name" value="DHOase"/>
    <property type="match status" value="1"/>
</dbReference>
<dbReference type="FunFam" id="3.20.20.140:FF:000006">
    <property type="entry name" value="Dihydroorotase"/>
    <property type="match status" value="1"/>
</dbReference>
<dbReference type="Gene3D" id="3.20.20.140">
    <property type="entry name" value="Metal-dependent hydrolases"/>
    <property type="match status" value="1"/>
</dbReference>
<dbReference type="HAMAP" id="MF_00219">
    <property type="entry name" value="PyrC_classII"/>
    <property type="match status" value="1"/>
</dbReference>
<dbReference type="InterPro" id="IPR006680">
    <property type="entry name" value="Amidohydro-rel"/>
</dbReference>
<dbReference type="InterPro" id="IPR004721">
    <property type="entry name" value="DHOdimr"/>
</dbReference>
<dbReference type="InterPro" id="IPR002195">
    <property type="entry name" value="Dihydroorotase_CS"/>
</dbReference>
<dbReference type="InterPro" id="IPR032466">
    <property type="entry name" value="Metal_Hydrolase"/>
</dbReference>
<dbReference type="NCBIfam" id="TIGR00856">
    <property type="entry name" value="pyrC_dimer"/>
    <property type="match status" value="1"/>
</dbReference>
<dbReference type="PANTHER" id="PTHR43137">
    <property type="entry name" value="DIHYDROOROTASE"/>
    <property type="match status" value="1"/>
</dbReference>
<dbReference type="PANTHER" id="PTHR43137:SF1">
    <property type="entry name" value="DIHYDROOROTASE"/>
    <property type="match status" value="1"/>
</dbReference>
<dbReference type="Pfam" id="PF01979">
    <property type="entry name" value="Amidohydro_1"/>
    <property type="match status" value="1"/>
</dbReference>
<dbReference type="PIRSF" id="PIRSF001237">
    <property type="entry name" value="DHOdimr"/>
    <property type="match status" value="1"/>
</dbReference>
<dbReference type="SUPFAM" id="SSF51556">
    <property type="entry name" value="Metallo-dependent hydrolases"/>
    <property type="match status" value="1"/>
</dbReference>
<dbReference type="PROSITE" id="PS00482">
    <property type="entry name" value="DIHYDROOROTASE_1"/>
    <property type="match status" value="1"/>
</dbReference>
<dbReference type="PROSITE" id="PS00483">
    <property type="entry name" value="DIHYDROOROTASE_2"/>
    <property type="match status" value="1"/>
</dbReference>
<reference key="1">
    <citation type="journal article" date="2011" name="J. Bacteriol.">
        <title>Comparative genomics of 28 Salmonella enterica isolates: evidence for CRISPR-mediated adaptive sublineage evolution.</title>
        <authorList>
            <person name="Fricke W.F."/>
            <person name="Mammel M.K."/>
            <person name="McDermott P.F."/>
            <person name="Tartera C."/>
            <person name="White D.G."/>
            <person name="Leclerc J.E."/>
            <person name="Ravel J."/>
            <person name="Cebula T.A."/>
        </authorList>
    </citation>
    <scope>NUCLEOTIDE SEQUENCE [LARGE SCALE GENOMIC DNA]</scope>
    <source>
        <strain>SL476</strain>
    </source>
</reference>
<feature type="chain" id="PRO_1000100059" description="Dihydroorotase">
    <location>
        <begin position="1"/>
        <end position="348"/>
    </location>
</feature>
<feature type="active site" evidence="1">
    <location>
        <position position="251"/>
    </location>
</feature>
<feature type="binding site" evidence="1">
    <location>
        <position position="17"/>
    </location>
    <ligand>
        <name>Zn(2+)</name>
        <dbReference type="ChEBI" id="CHEBI:29105"/>
        <label>1</label>
    </ligand>
</feature>
<feature type="binding site" evidence="1">
    <location>
        <begin position="19"/>
        <end position="21"/>
    </location>
    <ligand>
        <name>substrate</name>
    </ligand>
</feature>
<feature type="binding site" evidence="1">
    <location>
        <position position="19"/>
    </location>
    <ligand>
        <name>Zn(2+)</name>
        <dbReference type="ChEBI" id="CHEBI:29105"/>
        <label>1</label>
    </ligand>
</feature>
<feature type="binding site" evidence="1">
    <location>
        <position position="45"/>
    </location>
    <ligand>
        <name>substrate</name>
    </ligand>
</feature>
<feature type="binding site" description="via carbamate group" evidence="1">
    <location>
        <position position="103"/>
    </location>
    <ligand>
        <name>Zn(2+)</name>
        <dbReference type="ChEBI" id="CHEBI:29105"/>
        <label>1</label>
    </ligand>
</feature>
<feature type="binding site" description="via carbamate group" evidence="1">
    <location>
        <position position="103"/>
    </location>
    <ligand>
        <name>Zn(2+)</name>
        <dbReference type="ChEBI" id="CHEBI:29105"/>
        <label>2</label>
    </ligand>
</feature>
<feature type="binding site" evidence="1">
    <location>
        <position position="140"/>
    </location>
    <ligand>
        <name>substrate</name>
    </ligand>
</feature>
<feature type="binding site" evidence="1">
    <location>
        <position position="140"/>
    </location>
    <ligand>
        <name>Zn(2+)</name>
        <dbReference type="ChEBI" id="CHEBI:29105"/>
        <label>2</label>
    </ligand>
</feature>
<feature type="binding site" evidence="1">
    <location>
        <position position="178"/>
    </location>
    <ligand>
        <name>Zn(2+)</name>
        <dbReference type="ChEBI" id="CHEBI:29105"/>
        <label>2</label>
    </ligand>
</feature>
<feature type="binding site" evidence="1">
    <location>
        <position position="223"/>
    </location>
    <ligand>
        <name>substrate</name>
    </ligand>
</feature>
<feature type="binding site" evidence="1">
    <location>
        <position position="251"/>
    </location>
    <ligand>
        <name>Zn(2+)</name>
        <dbReference type="ChEBI" id="CHEBI:29105"/>
        <label>1</label>
    </ligand>
</feature>
<feature type="binding site" evidence="1">
    <location>
        <position position="255"/>
    </location>
    <ligand>
        <name>substrate</name>
    </ligand>
</feature>
<feature type="binding site" evidence="1">
    <location>
        <position position="267"/>
    </location>
    <ligand>
        <name>substrate</name>
    </ligand>
</feature>
<feature type="modified residue" description="N6-carboxylysine" evidence="1">
    <location>
        <position position="103"/>
    </location>
</feature>
<proteinExistence type="inferred from homology"/>
<gene>
    <name evidence="1" type="primary">pyrC</name>
    <name type="ordered locus">SeHA_C1275</name>
</gene>
<organism>
    <name type="scientific">Salmonella heidelberg (strain SL476)</name>
    <dbReference type="NCBI Taxonomy" id="454169"/>
    <lineage>
        <taxon>Bacteria</taxon>
        <taxon>Pseudomonadati</taxon>
        <taxon>Pseudomonadota</taxon>
        <taxon>Gammaproteobacteria</taxon>
        <taxon>Enterobacterales</taxon>
        <taxon>Enterobacteriaceae</taxon>
        <taxon>Salmonella</taxon>
    </lineage>
</organism>